<comment type="function">
    <text evidence="1">Can catalyze the hydrolysis of ATP in the presence of single-stranded DNA, the ATP-dependent uptake of single-stranded DNA by duplex DNA, and the ATP-dependent hybridization of homologous single-stranded DNAs. It interacts with LexA causing its activation and leading to its autocatalytic cleavage.</text>
</comment>
<comment type="subcellular location">
    <subcellularLocation>
        <location evidence="1">Cytoplasm</location>
    </subcellularLocation>
</comment>
<comment type="similarity">
    <text evidence="1">Belongs to the RecA family.</text>
</comment>
<gene>
    <name evidence="1" type="primary">recA</name>
    <name type="ordered locus">C8J_1574</name>
</gene>
<keyword id="KW-0067">ATP-binding</keyword>
<keyword id="KW-0963">Cytoplasm</keyword>
<keyword id="KW-0227">DNA damage</keyword>
<keyword id="KW-0233">DNA recombination</keyword>
<keyword id="KW-0234">DNA repair</keyword>
<keyword id="KW-0238">DNA-binding</keyword>
<keyword id="KW-0547">Nucleotide-binding</keyword>
<keyword id="KW-0742">SOS response</keyword>
<reference key="1">
    <citation type="journal article" date="2007" name="J. Bacteriol.">
        <title>The complete genome sequence of Campylobacter jejuni strain 81116 (NCTC11828).</title>
        <authorList>
            <person name="Pearson B.M."/>
            <person name="Gaskin D.J.H."/>
            <person name="Segers R.P.A.M."/>
            <person name="Wells J.M."/>
            <person name="Nuijten P.J.M."/>
            <person name="van Vliet A.H.M."/>
        </authorList>
    </citation>
    <scope>NUCLEOTIDE SEQUENCE [LARGE SCALE GENOMIC DNA]</scope>
    <source>
        <strain>81116 / NCTC 11828</strain>
    </source>
</reference>
<dbReference type="EMBL" id="CP000814">
    <property type="protein sequence ID" value="ABV53171.1"/>
    <property type="molecule type" value="Genomic_DNA"/>
</dbReference>
<dbReference type="RefSeq" id="WP_002851424.1">
    <property type="nucleotide sequence ID" value="NC_009839.1"/>
</dbReference>
<dbReference type="SMR" id="A8FNY4"/>
<dbReference type="KEGG" id="cju:C8J_1574"/>
<dbReference type="HOGENOM" id="CLU_040469_1_2_7"/>
<dbReference type="GO" id="GO:0005829">
    <property type="term" value="C:cytosol"/>
    <property type="evidence" value="ECO:0007669"/>
    <property type="project" value="TreeGrafter"/>
</dbReference>
<dbReference type="GO" id="GO:0005524">
    <property type="term" value="F:ATP binding"/>
    <property type="evidence" value="ECO:0007669"/>
    <property type="project" value="UniProtKB-UniRule"/>
</dbReference>
<dbReference type="GO" id="GO:0016887">
    <property type="term" value="F:ATP hydrolysis activity"/>
    <property type="evidence" value="ECO:0007669"/>
    <property type="project" value="InterPro"/>
</dbReference>
<dbReference type="GO" id="GO:0140664">
    <property type="term" value="F:ATP-dependent DNA damage sensor activity"/>
    <property type="evidence" value="ECO:0007669"/>
    <property type="project" value="InterPro"/>
</dbReference>
<dbReference type="GO" id="GO:0003684">
    <property type="term" value="F:damaged DNA binding"/>
    <property type="evidence" value="ECO:0007669"/>
    <property type="project" value="UniProtKB-UniRule"/>
</dbReference>
<dbReference type="GO" id="GO:0003697">
    <property type="term" value="F:single-stranded DNA binding"/>
    <property type="evidence" value="ECO:0007669"/>
    <property type="project" value="UniProtKB-UniRule"/>
</dbReference>
<dbReference type="GO" id="GO:0006310">
    <property type="term" value="P:DNA recombination"/>
    <property type="evidence" value="ECO:0007669"/>
    <property type="project" value="UniProtKB-UniRule"/>
</dbReference>
<dbReference type="GO" id="GO:0006281">
    <property type="term" value="P:DNA repair"/>
    <property type="evidence" value="ECO:0007669"/>
    <property type="project" value="UniProtKB-UniRule"/>
</dbReference>
<dbReference type="GO" id="GO:0009432">
    <property type="term" value="P:SOS response"/>
    <property type="evidence" value="ECO:0007669"/>
    <property type="project" value="UniProtKB-UniRule"/>
</dbReference>
<dbReference type="CDD" id="cd00983">
    <property type="entry name" value="RecA"/>
    <property type="match status" value="1"/>
</dbReference>
<dbReference type="FunFam" id="3.40.50.300:FF:000087">
    <property type="entry name" value="Recombinase RecA"/>
    <property type="match status" value="1"/>
</dbReference>
<dbReference type="Gene3D" id="3.40.50.300">
    <property type="entry name" value="P-loop containing nucleotide triphosphate hydrolases"/>
    <property type="match status" value="1"/>
</dbReference>
<dbReference type="HAMAP" id="MF_00268">
    <property type="entry name" value="RecA"/>
    <property type="match status" value="1"/>
</dbReference>
<dbReference type="InterPro" id="IPR003593">
    <property type="entry name" value="AAA+_ATPase"/>
</dbReference>
<dbReference type="InterPro" id="IPR013765">
    <property type="entry name" value="DNA_recomb/repair_RecA"/>
</dbReference>
<dbReference type="InterPro" id="IPR020584">
    <property type="entry name" value="DNA_recomb/repair_RecA_CS"/>
</dbReference>
<dbReference type="InterPro" id="IPR027417">
    <property type="entry name" value="P-loop_NTPase"/>
</dbReference>
<dbReference type="InterPro" id="IPR049261">
    <property type="entry name" value="RecA-like_C"/>
</dbReference>
<dbReference type="InterPro" id="IPR049428">
    <property type="entry name" value="RecA-like_N"/>
</dbReference>
<dbReference type="InterPro" id="IPR020588">
    <property type="entry name" value="RecA_ATP-bd"/>
</dbReference>
<dbReference type="InterPro" id="IPR023400">
    <property type="entry name" value="RecA_C_sf"/>
</dbReference>
<dbReference type="InterPro" id="IPR020587">
    <property type="entry name" value="RecA_monomer-monomer_interface"/>
</dbReference>
<dbReference type="NCBIfam" id="TIGR02012">
    <property type="entry name" value="tigrfam_recA"/>
    <property type="match status" value="1"/>
</dbReference>
<dbReference type="PANTHER" id="PTHR45900:SF1">
    <property type="entry name" value="MITOCHONDRIAL DNA REPAIR PROTEIN RECA HOMOLOG-RELATED"/>
    <property type="match status" value="1"/>
</dbReference>
<dbReference type="PANTHER" id="PTHR45900">
    <property type="entry name" value="RECA"/>
    <property type="match status" value="1"/>
</dbReference>
<dbReference type="Pfam" id="PF00154">
    <property type="entry name" value="RecA"/>
    <property type="match status" value="1"/>
</dbReference>
<dbReference type="Pfam" id="PF21096">
    <property type="entry name" value="RecA_C"/>
    <property type="match status" value="1"/>
</dbReference>
<dbReference type="PRINTS" id="PR00142">
    <property type="entry name" value="RECA"/>
</dbReference>
<dbReference type="SMART" id="SM00382">
    <property type="entry name" value="AAA"/>
    <property type="match status" value="1"/>
</dbReference>
<dbReference type="SUPFAM" id="SSF52540">
    <property type="entry name" value="P-loop containing nucleoside triphosphate hydrolases"/>
    <property type="match status" value="1"/>
</dbReference>
<dbReference type="SUPFAM" id="SSF54752">
    <property type="entry name" value="RecA protein, C-terminal domain"/>
    <property type="match status" value="1"/>
</dbReference>
<dbReference type="PROSITE" id="PS00321">
    <property type="entry name" value="RECA_1"/>
    <property type="match status" value="1"/>
</dbReference>
<dbReference type="PROSITE" id="PS50162">
    <property type="entry name" value="RECA_2"/>
    <property type="match status" value="1"/>
</dbReference>
<dbReference type="PROSITE" id="PS50163">
    <property type="entry name" value="RECA_3"/>
    <property type="match status" value="1"/>
</dbReference>
<name>RECA_CAMJ8</name>
<accession>A8FNY4</accession>
<sequence>MDDNKRKSLDAALKSLDKTFGKGTILRLGDKEVEQIDSIGTGSVGLDLALGIGGVPKGRIIEIYGPESSGKTTLTLHIIAECQKAGGVCAFIDAEHALDVKYAKNLGVNTDDLYVSQPDFGEQALEIVETIARSGAVDLIVVDSVAALTPKAEIEGDMGDQHVGLQARLMSQALRKLTGIVHKMNTTVIFINQIRMKIGAMGYGTPETTTGGNALKFYASVRLDVRKVATLKQNEEPIGNRVKVKVVKNKVAPPFRQAEFDVMFGEGLSREGELIDYGVKLDIVDKSGAWFSYKDKKLGQGRENSKAFLKENPEIADEITKAIQNSMGIEGMISGSEDDEGEE</sequence>
<proteinExistence type="inferred from homology"/>
<evidence type="ECO:0000255" key="1">
    <source>
        <dbReference type="HAMAP-Rule" id="MF_00268"/>
    </source>
</evidence>
<protein>
    <recommendedName>
        <fullName evidence="1">Protein RecA</fullName>
    </recommendedName>
    <alternativeName>
        <fullName evidence="1">Recombinase A</fullName>
    </alternativeName>
</protein>
<organism>
    <name type="scientific">Campylobacter jejuni subsp. jejuni serotype O:6 (strain 81116 / NCTC 11828)</name>
    <dbReference type="NCBI Taxonomy" id="407148"/>
    <lineage>
        <taxon>Bacteria</taxon>
        <taxon>Pseudomonadati</taxon>
        <taxon>Campylobacterota</taxon>
        <taxon>Epsilonproteobacteria</taxon>
        <taxon>Campylobacterales</taxon>
        <taxon>Campylobacteraceae</taxon>
        <taxon>Campylobacter</taxon>
    </lineage>
</organism>
<feature type="chain" id="PRO_1000071891" description="Protein RecA">
    <location>
        <begin position="1"/>
        <end position="343"/>
    </location>
</feature>
<feature type="binding site" evidence="1">
    <location>
        <begin position="65"/>
        <end position="72"/>
    </location>
    <ligand>
        <name>ATP</name>
        <dbReference type="ChEBI" id="CHEBI:30616"/>
    </ligand>
</feature>